<proteinExistence type="inferred from homology"/>
<protein>
    <recommendedName>
        <fullName>Flagellar basal-body rod protein FlgC</fullName>
    </recommendedName>
</protein>
<feature type="chain" id="PRO_0000180797" description="Flagellar basal-body rod protein FlgC">
    <location>
        <begin position="1"/>
        <end position="150"/>
    </location>
</feature>
<sequence length="150" mass="16258">MTAFHSLNVSASALTAQRVRMDVVSSNLANMDTTRAKQVNGEWVPYRRKMVSLQSKGESFSSILNSQMSGSGNAGNGVKVSKITEDDSDFNLVYDPTDPDANAEGYVQKPNVDPLKEMVDLVSSTRSYEANVTAMNATKGMLMKALEIGK</sequence>
<name>FLGC_BACSU</name>
<keyword id="KW-0975">Bacterial flagellum</keyword>
<keyword id="KW-1185">Reference proteome</keyword>
<reference key="1">
    <citation type="journal article" date="1991" name="Gene">
        <title>Gene-protein relationships in the flagellar hook-basal body complex of Bacillus subtilis: sequences of the flgB, flgC, flgG, fliE and fliF genes.</title>
        <authorList>
            <person name="Zuberi A.R."/>
            <person name="Ying C."/>
            <person name="Bischoff D.S."/>
            <person name="Ordal G.W."/>
        </authorList>
    </citation>
    <scope>NUCLEOTIDE SEQUENCE [GENOMIC DNA]</scope>
</reference>
<reference key="2">
    <citation type="journal article" date="1997" name="Nature">
        <title>The complete genome sequence of the Gram-positive bacterium Bacillus subtilis.</title>
        <authorList>
            <person name="Kunst F."/>
            <person name="Ogasawara N."/>
            <person name="Moszer I."/>
            <person name="Albertini A.M."/>
            <person name="Alloni G."/>
            <person name="Azevedo V."/>
            <person name="Bertero M.G."/>
            <person name="Bessieres P."/>
            <person name="Bolotin A."/>
            <person name="Borchert S."/>
            <person name="Borriss R."/>
            <person name="Boursier L."/>
            <person name="Brans A."/>
            <person name="Braun M."/>
            <person name="Brignell S.C."/>
            <person name="Bron S."/>
            <person name="Brouillet S."/>
            <person name="Bruschi C.V."/>
            <person name="Caldwell B."/>
            <person name="Capuano V."/>
            <person name="Carter N.M."/>
            <person name="Choi S.-K."/>
            <person name="Codani J.-J."/>
            <person name="Connerton I.F."/>
            <person name="Cummings N.J."/>
            <person name="Daniel R.A."/>
            <person name="Denizot F."/>
            <person name="Devine K.M."/>
            <person name="Duesterhoeft A."/>
            <person name="Ehrlich S.D."/>
            <person name="Emmerson P.T."/>
            <person name="Entian K.-D."/>
            <person name="Errington J."/>
            <person name="Fabret C."/>
            <person name="Ferrari E."/>
            <person name="Foulger D."/>
            <person name="Fritz C."/>
            <person name="Fujita M."/>
            <person name="Fujita Y."/>
            <person name="Fuma S."/>
            <person name="Galizzi A."/>
            <person name="Galleron N."/>
            <person name="Ghim S.-Y."/>
            <person name="Glaser P."/>
            <person name="Goffeau A."/>
            <person name="Golightly E.J."/>
            <person name="Grandi G."/>
            <person name="Guiseppi G."/>
            <person name="Guy B.J."/>
            <person name="Haga K."/>
            <person name="Haiech J."/>
            <person name="Harwood C.R."/>
            <person name="Henaut A."/>
            <person name="Hilbert H."/>
            <person name="Holsappel S."/>
            <person name="Hosono S."/>
            <person name="Hullo M.-F."/>
            <person name="Itaya M."/>
            <person name="Jones L.-M."/>
            <person name="Joris B."/>
            <person name="Karamata D."/>
            <person name="Kasahara Y."/>
            <person name="Klaerr-Blanchard M."/>
            <person name="Klein C."/>
            <person name="Kobayashi Y."/>
            <person name="Koetter P."/>
            <person name="Koningstein G."/>
            <person name="Krogh S."/>
            <person name="Kumano M."/>
            <person name="Kurita K."/>
            <person name="Lapidus A."/>
            <person name="Lardinois S."/>
            <person name="Lauber J."/>
            <person name="Lazarevic V."/>
            <person name="Lee S.-M."/>
            <person name="Levine A."/>
            <person name="Liu H."/>
            <person name="Masuda S."/>
            <person name="Mauel C."/>
            <person name="Medigue C."/>
            <person name="Medina N."/>
            <person name="Mellado R.P."/>
            <person name="Mizuno M."/>
            <person name="Moestl D."/>
            <person name="Nakai S."/>
            <person name="Noback M."/>
            <person name="Noone D."/>
            <person name="O'Reilly M."/>
            <person name="Ogawa K."/>
            <person name="Ogiwara A."/>
            <person name="Oudega B."/>
            <person name="Park S.-H."/>
            <person name="Parro V."/>
            <person name="Pohl T.M."/>
            <person name="Portetelle D."/>
            <person name="Porwollik S."/>
            <person name="Prescott A.M."/>
            <person name="Presecan E."/>
            <person name="Pujic P."/>
            <person name="Purnelle B."/>
            <person name="Rapoport G."/>
            <person name="Rey M."/>
            <person name="Reynolds S."/>
            <person name="Rieger M."/>
            <person name="Rivolta C."/>
            <person name="Rocha E."/>
            <person name="Roche B."/>
            <person name="Rose M."/>
            <person name="Sadaie Y."/>
            <person name="Sato T."/>
            <person name="Scanlan E."/>
            <person name="Schleich S."/>
            <person name="Schroeter R."/>
            <person name="Scoffone F."/>
            <person name="Sekiguchi J."/>
            <person name="Sekowska A."/>
            <person name="Seror S.J."/>
            <person name="Serror P."/>
            <person name="Shin B.-S."/>
            <person name="Soldo B."/>
            <person name="Sorokin A."/>
            <person name="Tacconi E."/>
            <person name="Takagi T."/>
            <person name="Takahashi H."/>
            <person name="Takemaru K."/>
            <person name="Takeuchi M."/>
            <person name="Tamakoshi A."/>
            <person name="Tanaka T."/>
            <person name="Terpstra P."/>
            <person name="Tognoni A."/>
            <person name="Tosato V."/>
            <person name="Uchiyama S."/>
            <person name="Vandenbol M."/>
            <person name="Vannier F."/>
            <person name="Vassarotti A."/>
            <person name="Viari A."/>
            <person name="Wambutt R."/>
            <person name="Wedler E."/>
            <person name="Wedler H."/>
            <person name="Weitzenegger T."/>
            <person name="Winters P."/>
            <person name="Wipat A."/>
            <person name="Yamamoto H."/>
            <person name="Yamane K."/>
            <person name="Yasumoto K."/>
            <person name="Yata K."/>
            <person name="Yoshida K."/>
            <person name="Yoshikawa H.-F."/>
            <person name="Zumstein E."/>
            <person name="Yoshikawa H."/>
            <person name="Danchin A."/>
        </authorList>
    </citation>
    <scope>NUCLEOTIDE SEQUENCE [LARGE SCALE GENOMIC DNA]</scope>
    <source>
        <strain>168</strain>
    </source>
</reference>
<organism>
    <name type="scientific">Bacillus subtilis (strain 168)</name>
    <dbReference type="NCBI Taxonomy" id="224308"/>
    <lineage>
        <taxon>Bacteria</taxon>
        <taxon>Bacillati</taxon>
        <taxon>Bacillota</taxon>
        <taxon>Bacilli</taxon>
        <taxon>Bacillales</taxon>
        <taxon>Bacillaceae</taxon>
        <taxon>Bacillus</taxon>
    </lineage>
</organism>
<dbReference type="EMBL" id="M54965">
    <property type="protein sequence ID" value="AAA22442.1"/>
    <property type="molecule type" value="Genomic_DNA"/>
</dbReference>
<dbReference type="EMBL" id="AL009126">
    <property type="protein sequence ID" value="CAB13492.1"/>
    <property type="molecule type" value="Genomic_DNA"/>
</dbReference>
<dbReference type="PIR" id="JG0020">
    <property type="entry name" value="JG0020"/>
</dbReference>
<dbReference type="RefSeq" id="NP_389501.1">
    <property type="nucleotide sequence ID" value="NC_000964.3"/>
</dbReference>
<dbReference type="RefSeq" id="WP_003245521.1">
    <property type="nucleotide sequence ID" value="NZ_OZ025638.1"/>
</dbReference>
<dbReference type="SMR" id="P24501"/>
<dbReference type="FunCoup" id="P24501">
    <property type="interactions" value="158"/>
</dbReference>
<dbReference type="STRING" id="224308.BSU16190"/>
<dbReference type="PaxDb" id="224308-BSU16190"/>
<dbReference type="EnsemblBacteria" id="CAB13492">
    <property type="protein sequence ID" value="CAB13492"/>
    <property type="gene ID" value="BSU_16190"/>
</dbReference>
<dbReference type="GeneID" id="938646"/>
<dbReference type="KEGG" id="bsu:BSU16190"/>
<dbReference type="PATRIC" id="fig|224308.179.peg.1759"/>
<dbReference type="eggNOG" id="COG1558">
    <property type="taxonomic scope" value="Bacteria"/>
</dbReference>
<dbReference type="InParanoid" id="P24501"/>
<dbReference type="OrthoDB" id="9794148at2"/>
<dbReference type="PhylomeDB" id="P24501"/>
<dbReference type="BioCyc" id="BSUB:BSU16190-MONOMER"/>
<dbReference type="Proteomes" id="UP000001570">
    <property type="component" value="Chromosome"/>
</dbReference>
<dbReference type="GO" id="GO:0009288">
    <property type="term" value="C:bacterial-type flagellum"/>
    <property type="evidence" value="ECO:0000318"/>
    <property type="project" value="GO_Central"/>
</dbReference>
<dbReference type="GO" id="GO:0030694">
    <property type="term" value="C:bacterial-type flagellum basal body, rod"/>
    <property type="evidence" value="ECO:0007669"/>
    <property type="project" value="InterPro"/>
</dbReference>
<dbReference type="GO" id="GO:0044780">
    <property type="term" value="P:bacterial-type flagellum assembly"/>
    <property type="evidence" value="ECO:0000315"/>
    <property type="project" value="CACAO"/>
</dbReference>
<dbReference type="GO" id="GO:0071978">
    <property type="term" value="P:bacterial-type flagellum-dependent swarming motility"/>
    <property type="evidence" value="ECO:0000315"/>
    <property type="project" value="CACAO"/>
</dbReference>
<dbReference type="InterPro" id="IPR001444">
    <property type="entry name" value="Flag_bb_rod_N"/>
</dbReference>
<dbReference type="InterPro" id="IPR019776">
    <property type="entry name" value="Flagellar_basal_body_rod_CS"/>
</dbReference>
<dbReference type="InterPro" id="IPR010930">
    <property type="entry name" value="Flg_bb/hook_C_dom"/>
</dbReference>
<dbReference type="InterPro" id="IPR006299">
    <property type="entry name" value="FlgC"/>
</dbReference>
<dbReference type="NCBIfam" id="TIGR01395">
    <property type="entry name" value="FlgC"/>
    <property type="match status" value="1"/>
</dbReference>
<dbReference type="PANTHER" id="PTHR30435:SF2">
    <property type="entry name" value="FLAGELLAR BASAL-BODY ROD PROTEIN FLGC"/>
    <property type="match status" value="1"/>
</dbReference>
<dbReference type="PANTHER" id="PTHR30435">
    <property type="entry name" value="FLAGELLAR PROTEIN"/>
    <property type="match status" value="1"/>
</dbReference>
<dbReference type="Pfam" id="PF00460">
    <property type="entry name" value="Flg_bb_rod"/>
    <property type="match status" value="1"/>
</dbReference>
<dbReference type="Pfam" id="PF06429">
    <property type="entry name" value="Flg_bbr_C"/>
    <property type="match status" value="1"/>
</dbReference>
<dbReference type="PROSITE" id="PS00588">
    <property type="entry name" value="FLAGELLA_BB_ROD"/>
    <property type="match status" value="1"/>
</dbReference>
<accession>P24501</accession>
<comment type="subunit">
    <text evidence="1">The basal body constitutes a major portion of the flagellar organelle and consists of four rings (L,P,S, and M) mounted on a central rod. The rod consists of about 26 subunits of FlgG in the distal portion, and FlgB, FlgC and FlgF are thought to build up the proximal portion of the rod with about 6 subunits each (By similarity).</text>
</comment>
<comment type="subcellular location">
    <subcellularLocation>
        <location evidence="1">Bacterial flagellum basal body</location>
    </subcellularLocation>
</comment>
<comment type="similarity">
    <text evidence="2">Belongs to the flagella basal body rod proteins family.</text>
</comment>
<gene>
    <name type="primary">flgC</name>
    <name type="ordered locus">BSU16190</name>
</gene>
<evidence type="ECO:0000250" key="1"/>
<evidence type="ECO:0000305" key="2"/>